<protein>
    <recommendedName>
        <fullName evidence="4">Nogalonic acid methyl ester cyclase</fullName>
        <shortName evidence="4">NAME cyclase</shortName>
        <ecNumber evidence="1 2">5.5.1.26</ecNumber>
    </recommendedName>
    <alternativeName>
        <fullName evidence="5">Polyketide cyclase SnoaL</fullName>
    </alternativeName>
</protein>
<organism>
    <name type="scientific">Streptomyces nogalater</name>
    <dbReference type="NCBI Taxonomy" id="38314"/>
    <lineage>
        <taxon>Bacteria</taxon>
        <taxon>Bacillati</taxon>
        <taxon>Actinomycetota</taxon>
        <taxon>Actinomycetes</taxon>
        <taxon>Kitasatosporales</taxon>
        <taxon>Streptomycetaceae</taxon>
        <taxon>Streptomyces</taxon>
    </lineage>
</organism>
<name>SNOAL_STRNO</name>
<dbReference type="EC" id="5.5.1.26" evidence="1 2"/>
<dbReference type="EMBL" id="AF187532">
    <property type="protein sequence ID" value="AAF01813.1"/>
    <property type="molecule type" value="Genomic_DNA"/>
</dbReference>
<dbReference type="PDB" id="1SJW">
    <property type="method" value="X-ray"/>
    <property type="resolution" value="1.35 A"/>
    <property type="chains" value="A=1-134"/>
</dbReference>
<dbReference type="PDBsum" id="1SJW"/>
<dbReference type="SMR" id="Q9RN59"/>
<dbReference type="DrugBank" id="DB04064">
    <property type="generic name" value="Nogalaviketone"/>
</dbReference>
<dbReference type="KEGG" id="ag:AAF01813"/>
<dbReference type="BRENDA" id="5.5.1.26">
    <property type="organism ID" value="13766"/>
</dbReference>
<dbReference type="EvolutionaryTrace" id="Q9RN59"/>
<dbReference type="GO" id="GO:0016853">
    <property type="term" value="F:isomerase activity"/>
    <property type="evidence" value="ECO:0007669"/>
    <property type="project" value="UniProtKB-KW"/>
</dbReference>
<dbReference type="GO" id="GO:0017000">
    <property type="term" value="P:antibiotic biosynthetic process"/>
    <property type="evidence" value="ECO:0007669"/>
    <property type="project" value="UniProtKB-KW"/>
</dbReference>
<dbReference type="GO" id="GO:0030638">
    <property type="term" value="P:polyketide metabolic process"/>
    <property type="evidence" value="ECO:0007669"/>
    <property type="project" value="InterPro"/>
</dbReference>
<dbReference type="Gene3D" id="3.10.450.50">
    <property type="match status" value="1"/>
</dbReference>
<dbReference type="InterPro" id="IPR009959">
    <property type="entry name" value="Cyclase_SnoaL-like"/>
</dbReference>
<dbReference type="InterPro" id="IPR032710">
    <property type="entry name" value="NTF2-like_dom_sf"/>
</dbReference>
<dbReference type="NCBIfam" id="NF033407">
    <property type="entry name" value="SnoaL_meth_ester"/>
    <property type="match status" value="1"/>
</dbReference>
<dbReference type="PANTHER" id="PTHR38436:SF1">
    <property type="entry name" value="ESTER CYCLASE"/>
    <property type="match status" value="1"/>
</dbReference>
<dbReference type="PANTHER" id="PTHR38436">
    <property type="entry name" value="POLYKETIDE CYCLASE SNOAL-LIKE DOMAIN"/>
    <property type="match status" value="1"/>
</dbReference>
<dbReference type="Pfam" id="PF07366">
    <property type="entry name" value="SnoaL"/>
    <property type="match status" value="1"/>
</dbReference>
<dbReference type="SUPFAM" id="SSF54427">
    <property type="entry name" value="NTF2-like"/>
    <property type="match status" value="1"/>
</dbReference>
<accession>Q9RN59</accession>
<keyword id="KW-0002">3D-structure</keyword>
<keyword id="KW-0045">Antibiotic biosynthesis</keyword>
<keyword id="KW-0413">Isomerase</keyword>
<proteinExistence type="evidence at protein level"/>
<evidence type="ECO:0000269" key="1">
    <source>
    </source>
</evidence>
<evidence type="ECO:0000269" key="2">
    <source>
    </source>
</evidence>
<evidence type="ECO:0000269" key="3">
    <source>
    </source>
</evidence>
<evidence type="ECO:0000303" key="4">
    <source>
    </source>
</evidence>
<evidence type="ECO:0000303" key="5">
    <source>
    </source>
</evidence>
<evidence type="ECO:0000305" key="6"/>
<evidence type="ECO:0000305" key="7">
    <source>
    </source>
</evidence>
<evidence type="ECO:0007744" key="8">
    <source>
        <dbReference type="PDB" id="1SJW"/>
    </source>
</evidence>
<evidence type="ECO:0007829" key="9">
    <source>
        <dbReference type="PDB" id="1SJW"/>
    </source>
</evidence>
<comment type="function">
    <text evidence="1 2">Involved in the biosynthesis of the aromatic polyketide antibiotic nogalamycin. Catalyzes the formation of nogalaviketone from nogalonic acid methyl ester (NAME), the last ring-closure step in the biosynthesis of nogalamycin.</text>
</comment>
<comment type="catalytic activity">
    <reaction evidence="1 2">
        <text>nogalaviketone = methyl nogalonate</text>
        <dbReference type="Rhea" id="RHEA:44356"/>
        <dbReference type="ChEBI" id="CHEBI:84342"/>
        <dbReference type="ChEBI" id="CHEBI:84345"/>
        <dbReference type="EC" id="5.5.1.26"/>
    </reaction>
    <physiologicalReaction direction="right-to-left" evidence="1 2">
        <dbReference type="Rhea" id="RHEA:44358"/>
    </physiologicalReaction>
</comment>
<comment type="pathway">
    <text evidence="1">Antibiotic biosynthesis.</text>
</comment>
<comment type="subunit">
    <text evidence="2 3">Homotetramer (PubMed:15071504, PubMed:15159574). Dimer of dimers (PubMed:15071504).</text>
</comment>
<comment type="similarity">
    <text evidence="6">Belongs to the polyketide cyclase DnrD family.</text>
</comment>
<reference key="1">
    <citation type="journal article" date="2000" name="Antimicrob. Agents Chemother.">
        <title>Identification of a cyclase gene dictating the C-9 stereochemistry of anthracyclines from Streptomyces nogalater.</title>
        <authorList>
            <person name="Torkkell S."/>
            <person name="Kunnari T."/>
            <person name="Palmu K."/>
            <person name="Hakala J."/>
            <person name="Mantsala P."/>
            <person name="Ylihonko K."/>
        </authorList>
    </citation>
    <scope>NUCLEOTIDE SEQUENCE [GENOMIC DNA]</scope>
    <scope>FUNCTION</scope>
    <scope>CATALYTIC ACTIVITY</scope>
    <scope>PATHWAY</scope>
    <source>
        <strain>ATCC 27451 / DSM 40546 / JCM 4553 / NBRC 13445 / NCIMB 9489 / VKM Ac-1290</strain>
    </source>
</reference>
<reference key="2">
    <citation type="journal article" date="2004" name="Acta Crystallogr. D">
        <title>Crystallization and preliminary crystallographic data of SnoaL, a polyketide cyclase in nogalamycin biosynthesis.</title>
        <authorList>
            <person name="Sultana A."/>
            <person name="Kallio P."/>
            <person name="Jansson A."/>
            <person name="Niemi J."/>
            <person name="Maentsaelae P."/>
            <person name="Schneider G."/>
        </authorList>
    </citation>
    <scope>CRYSTALLIZATION</scope>
    <scope>SUBUNIT</scope>
</reference>
<reference evidence="8" key="3">
    <citation type="journal article" date="2004" name="EMBO J.">
        <title>Structure of the polyketide cyclase SnoaL reveals a novel mechanism for enzymatic aldol condensation.</title>
        <authorList>
            <person name="Sultana A."/>
            <person name="Kallio P."/>
            <person name="Jansson A."/>
            <person name="Wang J.S."/>
            <person name="Niemi J."/>
            <person name="Mantsala P."/>
            <person name="Schneider G."/>
        </authorList>
    </citation>
    <scope>X-RAY CRYSTALLOGRAPHY (1.35 ANGSTROMS) IN COMPLEX WITH NOGALAVIKETONE</scope>
    <scope>FUNCTION</scope>
    <scope>CATALYTIC ACTIVITY</scope>
    <scope>REACTION MECHANISM</scope>
    <scope>SUBUNIT</scope>
    <scope>ACTIVE SITE</scope>
    <scope>MUTAGENESIS OF PHE-5; GLN-95 AND ASP-111</scope>
</reference>
<sequence length="134" mass="15505">MVSAFNTGRTDDVDEYIHPDYLNPATLEHGIHTGPKAFAQLVGWVRATFSEEARLEEVRIEERGPWVKAYLVLYGRHVGRLVGMPPTDRRFSGEQVHLMRIVDGKIRDHRDWPDFQGTLRQLGDPWPDDEGWRP</sequence>
<gene>
    <name evidence="4" type="primary">snoaL</name>
</gene>
<feature type="chain" id="PRO_0000452283" description="Nogalonic acid methyl ester cyclase">
    <location>
        <begin position="1"/>
        <end position="134"/>
    </location>
</feature>
<feature type="active site" description="Proton donor/acceptor" evidence="7">
    <location>
        <position position="111"/>
    </location>
</feature>
<feature type="binding site" evidence="2 8">
    <location>
        <position position="95"/>
    </location>
    <ligand>
        <name>nogalaviketone</name>
        <dbReference type="ChEBI" id="CHEBI:84342"/>
    </ligand>
</feature>
<feature type="mutagenesis site" description="20-fold decrease in specific activity." evidence="2">
    <original>F</original>
    <variation>Y</variation>
    <location>
        <position position="5"/>
    </location>
</feature>
<feature type="mutagenesis site" description="6-fold decrease in specific activity." evidence="2">
    <original>Q</original>
    <variation>A</variation>
    <location>
        <position position="95"/>
    </location>
</feature>
<feature type="mutagenesis site" description="Loss of activity." evidence="2">
    <original>D</original>
    <variation>A</variation>
    <location>
        <position position="111"/>
    </location>
</feature>
<feature type="helix" evidence="9">
    <location>
        <begin position="1"/>
        <end position="7"/>
    </location>
</feature>
<feature type="helix" evidence="9">
    <location>
        <begin position="13"/>
        <end position="15"/>
    </location>
</feature>
<feature type="strand" evidence="9">
    <location>
        <begin position="17"/>
        <end position="22"/>
    </location>
</feature>
<feature type="helix" evidence="9">
    <location>
        <begin position="24"/>
        <end position="29"/>
    </location>
</feature>
<feature type="helix" evidence="9">
    <location>
        <begin position="34"/>
        <end position="49"/>
    </location>
</feature>
<feature type="strand" evidence="9">
    <location>
        <begin position="54"/>
        <end position="63"/>
    </location>
</feature>
<feature type="strand" evidence="9">
    <location>
        <begin position="66"/>
        <end position="76"/>
    </location>
</feature>
<feature type="strand" evidence="9">
    <location>
        <begin position="90"/>
        <end position="102"/>
    </location>
</feature>
<feature type="strand" evidence="9">
    <location>
        <begin position="105"/>
        <end position="113"/>
    </location>
</feature>
<feature type="helix" evidence="9">
    <location>
        <begin position="115"/>
        <end position="121"/>
    </location>
</feature>